<gene>
    <name type="primary">LY75</name>
    <name type="synonym">CD205</name>
    <name type="synonym">CLEC13B</name>
</gene>
<evidence type="ECO:0000250" key="1"/>
<evidence type="ECO:0000250" key="2">
    <source>
        <dbReference type="UniProtKB" id="Q60767"/>
    </source>
</evidence>
<evidence type="ECO:0000255" key="3"/>
<evidence type="ECO:0000255" key="4">
    <source>
        <dbReference type="PROSITE-ProRule" id="PRU00040"/>
    </source>
</evidence>
<evidence type="ECO:0000255" key="5">
    <source>
        <dbReference type="PROSITE-ProRule" id="PRU00174"/>
    </source>
</evidence>
<evidence type="ECO:0000255" key="6">
    <source>
        <dbReference type="PROSITE-ProRule" id="PRU00479"/>
    </source>
</evidence>
<evidence type="ECO:0000269" key="7">
    <source>
    </source>
</evidence>
<evidence type="ECO:0000269" key="8">
    <source>
    </source>
</evidence>
<evidence type="ECO:0000269" key="9">
    <source>
    </source>
</evidence>
<evidence type="ECO:0000303" key="10">
    <source>
    </source>
</evidence>
<evidence type="ECO:0000305" key="11"/>
<evidence type="ECO:0000312" key="12">
    <source>
        <dbReference type="EMBL" id="AAC17636.1"/>
    </source>
</evidence>
<evidence type="ECO:0007744" key="13">
    <source>
    </source>
</evidence>
<evidence type="ECO:0007829" key="14">
    <source>
        <dbReference type="PDB" id="7JPT"/>
    </source>
</evidence>
<evidence type="ECO:0007829" key="15">
    <source>
        <dbReference type="PDB" id="8K8H"/>
    </source>
</evidence>
<dbReference type="EMBL" id="AF064827">
    <property type="protein sequence ID" value="AAC62622.1"/>
    <property type="molecule type" value="mRNA"/>
</dbReference>
<dbReference type="EMBL" id="AF011333">
    <property type="protein sequence ID" value="AAC17636.1"/>
    <property type="molecule type" value="mRNA"/>
</dbReference>
<dbReference type="EMBL" id="AY184222">
    <property type="protein sequence ID" value="AAN85434.1"/>
    <property type="molecule type" value="mRNA"/>
</dbReference>
<dbReference type="EMBL" id="AY314006">
    <property type="protein sequence ID" value="AAP79899.1"/>
    <property type="molecule type" value="mRNA"/>
</dbReference>
<dbReference type="EMBL" id="AC009961">
    <property type="protein sequence ID" value="AAY14943.1"/>
    <property type="molecule type" value="Genomic_DNA"/>
</dbReference>
<dbReference type="EMBL" id="AC093873">
    <property type="protein sequence ID" value="AAY24189.1"/>
    <property type="molecule type" value="Genomic_DNA"/>
</dbReference>
<dbReference type="CCDS" id="CCDS2211.1">
    <molecule id="O60449-1"/>
</dbReference>
<dbReference type="RefSeq" id="NP_001185688.1">
    <molecule id="O60449-2"/>
    <property type="nucleotide sequence ID" value="NM_001198759.1"/>
</dbReference>
<dbReference type="RefSeq" id="NP_001185689.1">
    <molecule id="O60449-3"/>
    <property type="nucleotide sequence ID" value="NM_001198760.1"/>
</dbReference>
<dbReference type="RefSeq" id="NP_002340.2">
    <molecule id="O60449-1"/>
    <property type="nucleotide sequence ID" value="NM_002349.4"/>
</dbReference>
<dbReference type="PDB" id="7JPT">
    <property type="method" value="EM"/>
    <property type="resolution" value="3.20 A"/>
    <property type="chains" value="A=30-1722"/>
</dbReference>
<dbReference type="PDB" id="7JPU">
    <property type="method" value="EM"/>
    <property type="resolution" value="5.00 A"/>
    <property type="chains" value="A/B/C/D=1-1722"/>
</dbReference>
<dbReference type="PDB" id="8HBC">
    <property type="method" value="X-ray"/>
    <property type="resolution" value="3.35 A"/>
    <property type="chains" value="A/B=31-627"/>
</dbReference>
<dbReference type="PDB" id="8K8H">
    <property type="method" value="X-ray"/>
    <property type="resolution" value="2.79 A"/>
    <property type="chains" value="A=32-627"/>
</dbReference>
<dbReference type="PDBsum" id="7JPT"/>
<dbReference type="PDBsum" id="7JPU"/>
<dbReference type="PDBsum" id="8HBC"/>
<dbReference type="PDBsum" id="8K8H"/>
<dbReference type="EMDB" id="EMD-22422"/>
<dbReference type="EMDB" id="EMD-22423"/>
<dbReference type="EMDB" id="EMD-6333"/>
<dbReference type="SMR" id="O60449"/>
<dbReference type="BioGRID" id="110243">
    <property type="interactions" value="1"/>
</dbReference>
<dbReference type="FunCoup" id="O60449">
    <property type="interactions" value="223"/>
</dbReference>
<dbReference type="IntAct" id="O60449">
    <property type="interactions" value="4"/>
</dbReference>
<dbReference type="STRING" id="9606.ENSP00000263636"/>
<dbReference type="ChEMBL" id="CHEMBL4804258"/>
<dbReference type="CarbonylDB" id="O60449"/>
<dbReference type="GlyConnect" id="1472">
    <property type="glycosylation" value="1 N-Linked glycan (1 site)"/>
</dbReference>
<dbReference type="GlyCosmos" id="O60449">
    <property type="glycosylation" value="16 sites, 2 glycans"/>
</dbReference>
<dbReference type="GlyGen" id="O60449">
    <property type="glycosylation" value="21 sites, 1 N-linked glycan (1 site), 1 O-linked glycan (1 site)"/>
</dbReference>
<dbReference type="iPTMnet" id="O60449"/>
<dbReference type="PhosphoSitePlus" id="O60449"/>
<dbReference type="BioMuta" id="LY75"/>
<dbReference type="jPOST" id="O60449"/>
<dbReference type="MassIVE" id="O60449"/>
<dbReference type="PaxDb" id="9606-ENSP00000263636"/>
<dbReference type="PeptideAtlas" id="O60449"/>
<dbReference type="ProteomicsDB" id="49406">
    <molecule id="O60449-1"/>
</dbReference>
<dbReference type="ProteomicsDB" id="49407">
    <molecule id="O60449-2"/>
</dbReference>
<dbReference type="ProteomicsDB" id="49408">
    <molecule id="O60449-3"/>
</dbReference>
<dbReference type="ABCD" id="O60449">
    <property type="antibodies" value="1 sequenced antibody"/>
</dbReference>
<dbReference type="Antibodypedia" id="3669">
    <property type="antibodies" value="569 antibodies from 40 providers"/>
</dbReference>
<dbReference type="CPTC" id="O60449">
    <property type="antibodies" value="1 antibody"/>
</dbReference>
<dbReference type="DNASU" id="4065"/>
<dbReference type="Ensembl" id="ENST00000263636.5">
    <molecule id="O60449-1"/>
    <property type="protein sequence ID" value="ENSP00000263636.4"/>
    <property type="gene ID" value="ENSG00000054219.11"/>
</dbReference>
<dbReference type="GeneID" id="100526664"/>
<dbReference type="GeneID" id="4065"/>
<dbReference type="KEGG" id="hsa:100526664"/>
<dbReference type="KEGG" id="hsa:4065"/>
<dbReference type="MANE-Select" id="ENST00000263636.5">
    <property type="protein sequence ID" value="ENSP00000263636.4"/>
    <property type="RefSeq nucleotide sequence ID" value="NM_002349.4"/>
    <property type="RefSeq protein sequence ID" value="NP_002340.2"/>
</dbReference>
<dbReference type="UCSC" id="uc002ubc.6">
    <molecule id="O60449-1"/>
    <property type="organism name" value="human"/>
</dbReference>
<dbReference type="AGR" id="HGNC:38828"/>
<dbReference type="AGR" id="HGNC:6729"/>
<dbReference type="CTD" id="100526664"/>
<dbReference type="CTD" id="4065"/>
<dbReference type="DisGeNET" id="100526664"/>
<dbReference type="DisGeNET" id="4065"/>
<dbReference type="GeneCards" id="LY75"/>
<dbReference type="HGNC" id="HGNC:6729">
    <property type="gene designation" value="LY75"/>
</dbReference>
<dbReference type="HPA" id="ENSG00000054219">
    <property type="expression patterns" value="Tissue enriched (lymphoid)"/>
</dbReference>
<dbReference type="MIM" id="604524">
    <property type="type" value="gene"/>
</dbReference>
<dbReference type="neXtProt" id="NX_O60449"/>
<dbReference type="OpenTargets" id="ENSG00000054219"/>
<dbReference type="OpenTargets" id="ENSG00000248672"/>
<dbReference type="PharmGKB" id="PA30493"/>
<dbReference type="VEuPathDB" id="HostDB:ENSG00000054219"/>
<dbReference type="eggNOG" id="KOG4297">
    <property type="taxonomic scope" value="Eukaryota"/>
</dbReference>
<dbReference type="GeneTree" id="ENSGT01050000244842"/>
<dbReference type="HOGENOM" id="CLU_002069_2_0_1"/>
<dbReference type="InParanoid" id="O60449"/>
<dbReference type="OMA" id="FWFVEEP"/>
<dbReference type="OrthoDB" id="6153550at2759"/>
<dbReference type="PAN-GO" id="O60449">
    <property type="GO annotations" value="2 GO annotations based on evolutionary models"/>
</dbReference>
<dbReference type="PhylomeDB" id="O60449"/>
<dbReference type="TreeFam" id="TF316663"/>
<dbReference type="PathwayCommons" id="O60449"/>
<dbReference type="SignaLink" id="O60449"/>
<dbReference type="BioGRID-ORCS" id="100526664">
    <property type="hits" value="32 hits in 667 CRISPR screens"/>
</dbReference>
<dbReference type="BioGRID-ORCS" id="4065">
    <property type="hits" value="13 hits in 1094 CRISPR screens"/>
</dbReference>
<dbReference type="GeneWiki" id="LY75"/>
<dbReference type="Pharos" id="O60449">
    <property type="development level" value="Tbio"/>
</dbReference>
<dbReference type="Proteomes" id="UP000005640">
    <property type="component" value="Chromosome 2"/>
</dbReference>
<dbReference type="RNAct" id="O60449">
    <property type="molecule type" value="protein"/>
</dbReference>
<dbReference type="Bgee" id="ENSG00000054219">
    <property type="expression patterns" value="Expressed in thymus and 166 other cell types or tissues"/>
</dbReference>
<dbReference type="GO" id="GO:0009897">
    <property type="term" value="C:external side of plasma membrane"/>
    <property type="evidence" value="ECO:0000318"/>
    <property type="project" value="GO_Central"/>
</dbReference>
<dbReference type="GO" id="GO:0070062">
    <property type="term" value="C:extracellular exosome"/>
    <property type="evidence" value="ECO:0007005"/>
    <property type="project" value="UniProtKB"/>
</dbReference>
<dbReference type="GO" id="GO:0005886">
    <property type="term" value="C:plasma membrane"/>
    <property type="evidence" value="ECO:0000304"/>
    <property type="project" value="ProtInc"/>
</dbReference>
<dbReference type="GO" id="GO:0030246">
    <property type="term" value="F:carbohydrate binding"/>
    <property type="evidence" value="ECO:0007669"/>
    <property type="project" value="UniProtKB-KW"/>
</dbReference>
<dbReference type="GO" id="GO:0038023">
    <property type="term" value="F:signaling receptor activity"/>
    <property type="evidence" value="ECO:0000318"/>
    <property type="project" value="GO_Central"/>
</dbReference>
<dbReference type="GO" id="GO:0006897">
    <property type="term" value="P:endocytosis"/>
    <property type="evidence" value="ECO:0007669"/>
    <property type="project" value="UniProtKB-KW"/>
</dbReference>
<dbReference type="GO" id="GO:0006955">
    <property type="term" value="P:immune response"/>
    <property type="evidence" value="ECO:0000304"/>
    <property type="project" value="ProtInc"/>
</dbReference>
<dbReference type="GO" id="GO:0006954">
    <property type="term" value="P:inflammatory response"/>
    <property type="evidence" value="ECO:0000304"/>
    <property type="project" value="ProtInc"/>
</dbReference>
<dbReference type="CDD" id="cd23411">
    <property type="entry name" value="beta-trefoil_Ricin_LY75"/>
    <property type="match status" value="1"/>
</dbReference>
<dbReference type="CDD" id="cd00037">
    <property type="entry name" value="CLECT"/>
    <property type="match status" value="10"/>
</dbReference>
<dbReference type="CDD" id="cd00062">
    <property type="entry name" value="FN2"/>
    <property type="match status" value="1"/>
</dbReference>
<dbReference type="FunFam" id="3.10.100.10:FF:000036">
    <property type="entry name" value="Lymphocyte antigen 75"/>
    <property type="match status" value="1"/>
</dbReference>
<dbReference type="FunFam" id="3.10.100.10:FF:000052">
    <property type="entry name" value="Lymphocyte antigen 75"/>
    <property type="match status" value="1"/>
</dbReference>
<dbReference type="FunFam" id="3.10.100.10:FF:000060">
    <property type="entry name" value="Lymphocyte antigen 75"/>
    <property type="match status" value="1"/>
</dbReference>
<dbReference type="FunFam" id="3.10.100.10:FF:000063">
    <property type="entry name" value="Lymphocyte antigen 75"/>
    <property type="match status" value="1"/>
</dbReference>
<dbReference type="FunFam" id="3.10.100.10:FF:000066">
    <property type="entry name" value="Lymphocyte antigen 75"/>
    <property type="match status" value="1"/>
</dbReference>
<dbReference type="FunFam" id="3.10.100.10:FF:000047">
    <property type="entry name" value="lymphocyte antigen 75"/>
    <property type="match status" value="1"/>
</dbReference>
<dbReference type="FunFam" id="2.80.10.50:FF:000040">
    <property type="entry name" value="lymphocyte antigen 75 isoform X1"/>
    <property type="match status" value="1"/>
</dbReference>
<dbReference type="FunFam" id="3.10.100.10:FF:000067">
    <property type="entry name" value="lymphocyte antigen 75 isoform X1"/>
    <property type="match status" value="1"/>
</dbReference>
<dbReference type="FunFam" id="2.10.10.10:FF:000004">
    <property type="entry name" value="lymphocyte antigen 75 precursor"/>
    <property type="match status" value="1"/>
</dbReference>
<dbReference type="FunFam" id="3.10.100.10:FF:000043">
    <property type="entry name" value="lymphocyte antigen 75 precursor"/>
    <property type="match status" value="1"/>
</dbReference>
<dbReference type="FunFam" id="3.10.100.10:FF:000049">
    <property type="entry name" value="Lymphocyte antigen 75 variant"/>
    <property type="match status" value="1"/>
</dbReference>
<dbReference type="FunFam" id="3.10.100.10:FF:000051">
    <property type="entry name" value="Lymphocyte antigen 75 variant"/>
    <property type="match status" value="1"/>
</dbReference>
<dbReference type="Gene3D" id="2.80.10.50">
    <property type="match status" value="1"/>
</dbReference>
<dbReference type="Gene3D" id="2.10.10.10">
    <property type="entry name" value="Fibronectin, type II, collagen-binding"/>
    <property type="match status" value="1"/>
</dbReference>
<dbReference type="Gene3D" id="3.10.100.10">
    <property type="entry name" value="Mannose-Binding Protein A, subunit A"/>
    <property type="match status" value="10"/>
</dbReference>
<dbReference type="InterPro" id="IPR001304">
    <property type="entry name" value="C-type_lectin-like"/>
</dbReference>
<dbReference type="InterPro" id="IPR016186">
    <property type="entry name" value="C-type_lectin-like/link_sf"/>
</dbReference>
<dbReference type="InterPro" id="IPR050111">
    <property type="entry name" value="C-type_lectin/snaclec_domain"/>
</dbReference>
<dbReference type="InterPro" id="IPR018378">
    <property type="entry name" value="C-type_lectin_CS"/>
</dbReference>
<dbReference type="InterPro" id="IPR016187">
    <property type="entry name" value="CTDL_fold"/>
</dbReference>
<dbReference type="InterPro" id="IPR000562">
    <property type="entry name" value="FN_type2_dom"/>
</dbReference>
<dbReference type="InterPro" id="IPR036943">
    <property type="entry name" value="FN_type2_sf"/>
</dbReference>
<dbReference type="InterPro" id="IPR013806">
    <property type="entry name" value="Kringle-like"/>
</dbReference>
<dbReference type="InterPro" id="IPR035992">
    <property type="entry name" value="Ricin_B-like_lectins"/>
</dbReference>
<dbReference type="InterPro" id="IPR000772">
    <property type="entry name" value="Ricin_B_lectin"/>
</dbReference>
<dbReference type="PANTHER" id="PTHR22803">
    <property type="entry name" value="MANNOSE, PHOSPHOLIPASE, LECTIN RECEPTOR RELATED"/>
    <property type="match status" value="1"/>
</dbReference>
<dbReference type="Pfam" id="PF24562">
    <property type="entry name" value="CysR_MRC2_N"/>
    <property type="match status" value="1"/>
</dbReference>
<dbReference type="Pfam" id="PF00040">
    <property type="entry name" value="fn2"/>
    <property type="match status" value="1"/>
</dbReference>
<dbReference type="Pfam" id="PF00059">
    <property type="entry name" value="Lectin_C"/>
    <property type="match status" value="10"/>
</dbReference>
<dbReference type="SMART" id="SM00034">
    <property type="entry name" value="CLECT"/>
    <property type="match status" value="10"/>
</dbReference>
<dbReference type="SMART" id="SM00059">
    <property type="entry name" value="FN2"/>
    <property type="match status" value="1"/>
</dbReference>
<dbReference type="SMART" id="SM00458">
    <property type="entry name" value="RICIN"/>
    <property type="match status" value="1"/>
</dbReference>
<dbReference type="SUPFAM" id="SSF56436">
    <property type="entry name" value="C-type lectin-like"/>
    <property type="match status" value="10"/>
</dbReference>
<dbReference type="SUPFAM" id="SSF57440">
    <property type="entry name" value="Kringle-like"/>
    <property type="match status" value="1"/>
</dbReference>
<dbReference type="SUPFAM" id="SSF50370">
    <property type="entry name" value="Ricin B-like lectins"/>
    <property type="match status" value="1"/>
</dbReference>
<dbReference type="PROSITE" id="PS00615">
    <property type="entry name" value="C_TYPE_LECTIN_1"/>
    <property type="match status" value="1"/>
</dbReference>
<dbReference type="PROSITE" id="PS50041">
    <property type="entry name" value="C_TYPE_LECTIN_2"/>
    <property type="match status" value="10"/>
</dbReference>
<dbReference type="PROSITE" id="PS00023">
    <property type="entry name" value="FN2_1"/>
    <property type="match status" value="1"/>
</dbReference>
<dbReference type="PROSITE" id="PS51092">
    <property type="entry name" value="FN2_2"/>
    <property type="match status" value="1"/>
</dbReference>
<dbReference type="PROSITE" id="PS50231">
    <property type="entry name" value="RICIN_B_LECTIN"/>
    <property type="match status" value="1"/>
</dbReference>
<proteinExistence type="evidence at protein level"/>
<protein>
    <recommendedName>
        <fullName>Lymphocyte antigen 75</fullName>
        <shortName>Ly-75</shortName>
    </recommendedName>
    <alternativeName>
        <fullName>C-type lectin domain family 13 member B</fullName>
    </alternativeName>
    <alternativeName>
        <fullName>DEC-205</fullName>
    </alternativeName>
    <alternativeName>
        <fullName>gp200-MR6</fullName>
    </alternativeName>
    <cdAntigenName>CD205</cdAntigenName>
</protein>
<accession>O60449</accession>
<accession>O75913</accession>
<accession>Q53R46</accession>
<accession>Q53TF5</accession>
<accession>Q7Z575</accession>
<accession>Q7Z577</accession>
<reference evidence="11" key="1">
    <citation type="journal article" date="1998" name="Eur. J. Immunol.">
        <title>The gp200-MR6 molecule which is functionally associated with the IL-4 receptor modulates B cell phenotype and is a novel member of the human macrophage mannose receptor family.</title>
        <authorList>
            <person name="McKay P.F."/>
            <person name="Imami N."/>
            <person name="Johns M."/>
            <person name="Taylor-Fishwick D.A."/>
            <person name="Sedibane L.M."/>
            <person name="Totty N.F."/>
            <person name="Hsuan J.J."/>
            <person name="Palmer D.B."/>
            <person name="George A.J.T."/>
            <person name="Foxwell B.M.J."/>
            <person name="Ritter M.A."/>
        </authorList>
    </citation>
    <scope>NUCLEOTIDE SEQUENCE [MRNA] (ISOFORM 4)</scope>
    <scope>PARTIAL PROTEIN SEQUENCE</scope>
    <scope>TISSUE SPECIFICITY</scope>
    <scope>GLYCOSYLATION</scope>
    <scope>VARIANTS ASP-268 AND GLU-807</scope>
    <source>
        <tissue>Thymus</tissue>
    </source>
</reference>
<reference evidence="11" key="2">
    <citation type="journal article" date="1998" name="Immunogenetics">
        <title>cDNA cloning of human DEC-205, a putative antigen-uptake receptor on dendritic cells.</title>
        <authorList>
            <person name="Kato M."/>
            <person name="Neil T.K."/>
            <person name="Clark G.J."/>
            <person name="Morris C.M."/>
            <person name="Sorg R.V."/>
            <person name="Hart D.N.J."/>
        </authorList>
    </citation>
    <scope>NUCLEOTIDE SEQUENCE [MRNA] (ISOFORM 4)</scope>
    <scope>VARIANT ASN-1321</scope>
</reference>
<reference key="3">
    <citation type="journal article" date="2003" name="J. Biol. Chem.">
        <title>Hodgkin's lymphoma cell lines express a fusion protein encoded by intergenically spliced mRNA for the multilectin receptor DEC-205 (CD205) and a novel C-type lectin receptor DCL-1.</title>
        <authorList>
            <person name="Kato M."/>
            <person name="Khan S."/>
            <person name="Gonzalez N."/>
            <person name="O'Neill B.P."/>
            <person name="McDonald K.J."/>
            <person name="Cooper B.J."/>
            <person name="Angel N.Z."/>
            <person name="Hart D.N.J."/>
        </authorList>
    </citation>
    <scope>NUCLEOTIDE SEQUENCE [MRNA] (ISOFORMS 2 AND 3)</scope>
    <scope>TISSUE SPECIFICITY</scope>
    <scope>VARIANT ASN-1321</scope>
</reference>
<reference key="4">
    <citation type="journal article" date="2005" name="Nature">
        <title>Generation and annotation of the DNA sequences of human chromosomes 2 and 4.</title>
        <authorList>
            <person name="Hillier L.W."/>
            <person name="Graves T.A."/>
            <person name="Fulton R.S."/>
            <person name="Fulton L.A."/>
            <person name="Pepin K.H."/>
            <person name="Minx P."/>
            <person name="Wagner-McPherson C."/>
            <person name="Layman D."/>
            <person name="Wylie K."/>
            <person name="Sekhon M."/>
            <person name="Becker M.C."/>
            <person name="Fewell G.A."/>
            <person name="Delehaunty K.D."/>
            <person name="Miner T.L."/>
            <person name="Nash W.E."/>
            <person name="Kremitzki C."/>
            <person name="Oddy L."/>
            <person name="Du H."/>
            <person name="Sun H."/>
            <person name="Bradshaw-Cordum H."/>
            <person name="Ali J."/>
            <person name="Carter J."/>
            <person name="Cordes M."/>
            <person name="Harris A."/>
            <person name="Isak A."/>
            <person name="van Brunt A."/>
            <person name="Nguyen C."/>
            <person name="Du F."/>
            <person name="Courtney L."/>
            <person name="Kalicki J."/>
            <person name="Ozersky P."/>
            <person name="Abbott S."/>
            <person name="Armstrong J."/>
            <person name="Belter E.A."/>
            <person name="Caruso L."/>
            <person name="Cedroni M."/>
            <person name="Cotton M."/>
            <person name="Davidson T."/>
            <person name="Desai A."/>
            <person name="Elliott G."/>
            <person name="Erb T."/>
            <person name="Fronick C."/>
            <person name="Gaige T."/>
            <person name="Haakenson W."/>
            <person name="Haglund K."/>
            <person name="Holmes A."/>
            <person name="Harkins R."/>
            <person name="Kim K."/>
            <person name="Kruchowski S.S."/>
            <person name="Strong C.M."/>
            <person name="Grewal N."/>
            <person name="Goyea E."/>
            <person name="Hou S."/>
            <person name="Levy A."/>
            <person name="Martinka S."/>
            <person name="Mead K."/>
            <person name="McLellan M.D."/>
            <person name="Meyer R."/>
            <person name="Randall-Maher J."/>
            <person name="Tomlinson C."/>
            <person name="Dauphin-Kohlberg S."/>
            <person name="Kozlowicz-Reilly A."/>
            <person name="Shah N."/>
            <person name="Swearengen-Shahid S."/>
            <person name="Snider J."/>
            <person name="Strong J.T."/>
            <person name="Thompson J."/>
            <person name="Yoakum M."/>
            <person name="Leonard S."/>
            <person name="Pearman C."/>
            <person name="Trani L."/>
            <person name="Radionenko M."/>
            <person name="Waligorski J.E."/>
            <person name="Wang C."/>
            <person name="Rock S.M."/>
            <person name="Tin-Wollam A.-M."/>
            <person name="Maupin R."/>
            <person name="Latreille P."/>
            <person name="Wendl M.C."/>
            <person name="Yang S.-P."/>
            <person name="Pohl C."/>
            <person name="Wallis J.W."/>
            <person name="Spieth J."/>
            <person name="Bieri T.A."/>
            <person name="Berkowicz N."/>
            <person name="Nelson J.O."/>
            <person name="Osborne J."/>
            <person name="Ding L."/>
            <person name="Meyer R."/>
            <person name="Sabo A."/>
            <person name="Shotland Y."/>
            <person name="Sinha P."/>
            <person name="Wohldmann P.E."/>
            <person name="Cook L.L."/>
            <person name="Hickenbotham M.T."/>
            <person name="Eldred J."/>
            <person name="Williams D."/>
            <person name="Jones T.A."/>
            <person name="She X."/>
            <person name="Ciccarelli F.D."/>
            <person name="Izaurralde E."/>
            <person name="Taylor J."/>
            <person name="Schmutz J."/>
            <person name="Myers R.M."/>
            <person name="Cox D.R."/>
            <person name="Huang X."/>
            <person name="McPherson J.D."/>
            <person name="Mardis E.R."/>
            <person name="Clifton S.W."/>
            <person name="Warren W.C."/>
            <person name="Chinwalla A.T."/>
            <person name="Eddy S.R."/>
            <person name="Marra M.A."/>
            <person name="Ovcharenko I."/>
            <person name="Furey T.S."/>
            <person name="Miller W."/>
            <person name="Eichler E.E."/>
            <person name="Bork P."/>
            <person name="Suyama M."/>
            <person name="Torrents D."/>
            <person name="Waterston R.H."/>
            <person name="Wilson R.K."/>
        </authorList>
    </citation>
    <scope>NUCLEOTIDE SEQUENCE [LARGE SCALE GENOMIC DNA]</scope>
</reference>
<reference key="5">
    <citation type="journal article" date="2008" name="Proc. Natl. Acad. Sci. U.S.A.">
        <title>A quantitative atlas of mitotic phosphorylation.</title>
        <authorList>
            <person name="Dephoure N."/>
            <person name="Zhou C."/>
            <person name="Villen J."/>
            <person name="Beausoleil S.A."/>
            <person name="Bakalarski C.E."/>
            <person name="Elledge S.J."/>
            <person name="Gygi S.P."/>
        </authorList>
    </citation>
    <scope>PHOSPHORYLATION [LARGE SCALE ANALYSIS] AT TYR-933</scope>
    <scope>IDENTIFICATION BY MASS SPECTROMETRY [LARGE SCALE ANALYSIS]</scope>
    <source>
        <tissue>Cervix carcinoma</tissue>
    </source>
</reference>
<keyword id="KW-0002">3D-structure</keyword>
<keyword id="KW-0025">Alternative splicing</keyword>
<keyword id="KW-0903">Direct protein sequencing</keyword>
<keyword id="KW-1015">Disulfide bond</keyword>
<keyword id="KW-0254">Endocytosis</keyword>
<keyword id="KW-0325">Glycoprotein</keyword>
<keyword id="KW-0430">Lectin</keyword>
<keyword id="KW-0472">Membrane</keyword>
<keyword id="KW-0597">Phosphoprotein</keyword>
<keyword id="KW-1267">Proteomics identification</keyword>
<keyword id="KW-0675">Receptor</keyword>
<keyword id="KW-1185">Reference proteome</keyword>
<keyword id="KW-0677">Repeat</keyword>
<keyword id="KW-0732">Signal</keyword>
<keyword id="KW-0812">Transmembrane</keyword>
<keyword id="KW-1133">Transmembrane helix</keyword>
<organism evidence="12">
    <name type="scientific">Homo sapiens</name>
    <name type="common">Human</name>
    <dbReference type="NCBI Taxonomy" id="9606"/>
    <lineage>
        <taxon>Eukaryota</taxon>
        <taxon>Metazoa</taxon>
        <taxon>Chordata</taxon>
        <taxon>Craniata</taxon>
        <taxon>Vertebrata</taxon>
        <taxon>Euteleostomi</taxon>
        <taxon>Mammalia</taxon>
        <taxon>Eutheria</taxon>
        <taxon>Euarchontoglires</taxon>
        <taxon>Primates</taxon>
        <taxon>Haplorrhini</taxon>
        <taxon>Catarrhini</taxon>
        <taxon>Hominidae</taxon>
        <taxon>Homo</taxon>
    </lineage>
</organism>
<comment type="function">
    <text evidence="1">Acts as an endocytic receptor to direct captured antigens from the extracellular space to a specialized antigen-processing compartment (By similarity). Causes reduced proliferation of B-lymphocytes.</text>
</comment>
<comment type="interaction">
    <interactant intactId="EBI-10186753">
        <id>O60449-3</id>
    </interactant>
    <interactant intactId="EBI-743099">
        <id>Q969F0</id>
        <label>FATE1</label>
    </interactant>
    <organismsDiffer>false</organismsDiffer>
    <experiments>3</experiments>
</comment>
<comment type="subcellular location">
    <subcellularLocation>
        <location evidence="1">Membrane</location>
        <topology evidence="1">Single-pass type I membrane protein</topology>
    </subcellularLocation>
</comment>
<comment type="alternative products">
    <event type="alternative splicing"/>
    <isoform>
        <id>O60449-1</id>
        <name>4</name>
        <sequence type="displayed"/>
    </isoform>
    <isoform>
        <id>O60449-2</id>
        <name>2</name>
        <name>Fusion protein variant V34-2</name>
        <sequence type="described" ref="VSP_020909"/>
    </isoform>
    <isoform>
        <id>Q8IX05-2</id>
        <name>5</name>
        <sequence type="external"/>
    </isoform>
    <isoform>
        <id>O60449-3</id>
        <name>3</name>
        <name>Fusion protein variant V33-2</name>
        <sequence type="described" ref="VSP_020908"/>
    </isoform>
    <isoform>
        <id>Q8IX05-1</id>
        <name>1</name>
        <sequence type="external"/>
    </isoform>
</comment>
<comment type="tissue specificity">
    <text evidence="7 9">Expressed in spleen, thymus, colon and peripheral blood lymphocytes. Detected in myeloid and B-lymphoid cell lines. Isoform 2 and isoform 3 are expressed in malignant Hodgkin lymphoma cells called Hodgkin and Reed-Sternberg (HRS) cells.</text>
</comment>
<comment type="PTM">
    <text evidence="9">N-glycosylated.</text>
</comment>
<comment type="miscellaneous">
    <text>Isoform 2 and isoform 3 are produced in HRS cells by a transcriptional control mechanism which cotranscribe an mRNA containing LY75 and CD302 prior to generating the intergenically spliced mRNA to produce LY75/CD302 fusion proteins.</text>
</comment>
<comment type="miscellaneous">
    <molecule>Isoform 2</molecule>
    <text evidence="11">Produced by intergenic splicing of LY75 and CD302.</text>
</comment>
<comment type="miscellaneous">
    <molecule>Isoform 3</molecule>
    <text evidence="11">Produced by intergenic splicing of LY75 and CD302.</text>
</comment>
<comment type="online information" name="Functional Glycomics Gateway - Glycan Binding">
    <link uri="http://www.functionalglycomics.org/glycomics/GBPServlet?&amp;operationType=view&amp;cbpId=cbp_hum_Ctlect_250"/>
    <text>DEC-205</text>
</comment>
<feature type="signal peptide" evidence="9">
    <location>
        <begin position="1"/>
        <end position="27"/>
    </location>
</feature>
<feature type="chain" id="PRO_0000017552" description="Lymphocyte antigen 75">
    <location>
        <begin position="28"/>
        <end position="1722"/>
    </location>
</feature>
<feature type="topological domain" description="Extracellular" evidence="3">
    <location>
        <begin position="28"/>
        <end position="1666"/>
    </location>
</feature>
<feature type="transmembrane region" description="Helical" evidence="3">
    <location>
        <begin position="1667"/>
        <end position="1691"/>
    </location>
</feature>
<feature type="topological domain" description="Cytoplasmic" evidence="3">
    <location>
        <begin position="1692"/>
        <end position="1722"/>
    </location>
</feature>
<feature type="domain" description="Ricin B-type lectin" evidence="5">
    <location>
        <begin position="33"/>
        <end position="156"/>
    </location>
</feature>
<feature type="domain" description="Fibronectin type-II" evidence="6">
    <location>
        <begin position="164"/>
        <end position="211"/>
    </location>
</feature>
<feature type="domain" description="C-type lectin 1" evidence="4">
    <location>
        <begin position="225"/>
        <end position="341"/>
    </location>
</feature>
<feature type="domain" description="C-type lectin 2" evidence="4">
    <location>
        <begin position="368"/>
        <end position="486"/>
    </location>
</feature>
<feature type="domain" description="C-type lectin 3" evidence="4">
    <location>
        <begin position="493"/>
        <end position="625"/>
    </location>
</feature>
<feature type="domain" description="C-type lectin 4" evidence="4">
    <location>
        <begin position="652"/>
        <end position="778"/>
    </location>
</feature>
<feature type="domain" description="C-type lectin 5" evidence="4">
    <location>
        <begin position="818"/>
        <end position="931"/>
    </location>
</feature>
<feature type="domain" description="C-type lectin 6" evidence="4">
    <location>
        <begin position="958"/>
        <end position="1091"/>
    </location>
</feature>
<feature type="domain" description="C-type lectin 7" evidence="4">
    <location>
        <begin position="1110"/>
        <end position="1222"/>
    </location>
</feature>
<feature type="domain" description="C-type lectin 8" evidence="4">
    <location>
        <begin position="1251"/>
        <end position="1374"/>
    </location>
</feature>
<feature type="domain" description="C-type lectin 9" evidence="4">
    <location>
        <begin position="1401"/>
        <end position="1513"/>
    </location>
</feature>
<feature type="domain" description="C-type lectin 10" evidence="4">
    <location>
        <begin position="1542"/>
        <end position="1661"/>
    </location>
</feature>
<feature type="modified residue" description="Phosphotyrosine" evidence="13">
    <location>
        <position position="933"/>
    </location>
</feature>
<feature type="modified residue" description="Phosphoserine" evidence="2">
    <location>
        <position position="1703"/>
    </location>
</feature>
<feature type="modified residue" description="Phosphoserine" evidence="2">
    <location>
        <position position="1719"/>
    </location>
</feature>
<feature type="glycosylation site" description="N-linked (GlcNAc...) asparagine" evidence="3">
    <location>
        <position position="135"/>
    </location>
</feature>
<feature type="glycosylation site" description="N-linked (GlcNAc...) asparagine" evidence="3">
    <location>
        <position position="345"/>
    </location>
</feature>
<feature type="glycosylation site" description="N-linked (GlcNAc...) asparagine" evidence="3">
    <location>
        <position position="377"/>
    </location>
</feature>
<feature type="glycosylation site" description="N-linked (GlcNAc...) asparagine" evidence="3">
    <location>
        <position position="529"/>
    </location>
</feature>
<feature type="glycosylation site" description="N-linked (GlcNAc...) asparagine" evidence="3">
    <location>
        <position position="843"/>
    </location>
</feature>
<feature type="glycosylation site" description="N-linked (GlcNAc...) asparagine" evidence="3">
    <location>
        <position position="865"/>
    </location>
</feature>
<feature type="glycosylation site" description="N-linked (GlcNAc...) asparagine" evidence="3">
    <location>
        <position position="934"/>
    </location>
</feature>
<feature type="glycosylation site" description="N-linked (GlcNAc...) asparagine" evidence="3">
    <location>
        <position position="1076"/>
    </location>
</feature>
<feature type="glycosylation site" description="N-linked (GlcNAc...) asparagine" evidence="3">
    <location>
        <position position="1103"/>
    </location>
</feature>
<feature type="glycosylation site" description="N-linked (GlcNAc...) asparagine" evidence="3">
    <location>
        <position position="1225"/>
    </location>
</feature>
<feature type="glycosylation site" description="N-linked (GlcNAc...) asparagine" evidence="3">
    <location>
        <position position="1320"/>
    </location>
</feature>
<feature type="glycosylation site" description="N-linked (GlcNAc...) asparagine" evidence="3">
    <location>
        <position position="1392"/>
    </location>
</feature>
<feature type="glycosylation site" description="N-linked (GlcNAc...) asparagine" evidence="3">
    <location>
        <position position="1593"/>
    </location>
</feature>
<feature type="glycosylation site" description="N-linked (GlcNAc...) asparagine" evidence="3">
    <location>
        <position position="1626"/>
    </location>
</feature>
<feature type="disulfide bond" evidence="1">
    <location>
        <begin position="169"/>
        <end position="194"/>
    </location>
</feature>
<feature type="disulfide bond" evidence="1">
    <location>
        <begin position="183"/>
        <end position="209"/>
    </location>
</feature>
<feature type="disulfide bond" evidence="1">
    <location>
        <begin position="247"/>
        <end position="340"/>
    </location>
</feature>
<feature type="disulfide bond" evidence="1">
    <location>
        <begin position="317"/>
        <end position="332"/>
    </location>
</feature>
<feature type="disulfide bond" evidence="1">
    <location>
        <begin position="389"/>
        <end position="485"/>
    </location>
</feature>
<feature type="disulfide bond" evidence="1">
    <location>
        <begin position="462"/>
        <end position="477"/>
    </location>
</feature>
<feature type="disulfide bond" evidence="1">
    <location>
        <begin position="597"/>
        <end position="614"/>
    </location>
</feature>
<feature type="disulfide bond" evidence="1">
    <location>
        <begin position="840"/>
        <end position="930"/>
    </location>
</feature>
<feature type="disulfide bond" evidence="1">
    <location>
        <begin position="904"/>
        <end position="922"/>
    </location>
</feature>
<feature type="disulfide bond" evidence="1">
    <location>
        <begin position="1060"/>
        <end position="1080"/>
    </location>
</feature>
<feature type="disulfide bond" evidence="1">
    <location>
        <begin position="1197"/>
        <end position="1211"/>
    </location>
</feature>
<feature type="disulfide bond" evidence="1">
    <location>
        <begin position="1488"/>
        <end position="1502"/>
    </location>
</feature>
<feature type="disulfide bond" evidence="1">
    <location>
        <begin position="1635"/>
        <end position="1650"/>
    </location>
</feature>
<feature type="splice variant" id="VSP_020908" description="In isoform 3." evidence="10">
    <original>DQSWSWLDGSEVTFVKWENKSKSGVGRCSMLIASNETWKKVECEHGFGRVVCKVPLGPDYTAIAIIVATLSILVLMGGLIWFLFQRHRLHLAGFSSVRYAQGVNEDEIMLPSFHD</original>
    <variation>DCPSSTWIQFQDSCYIFLQEAIKVESIEDVRNQCTDHGADMISIHNEEENAFILDTLKKQWKGPDDILLGMFYDTDDASFKWFDNSNMTFDKWTDQDDDEDLVDTCAFLHIKTGEWKKGNCEVSSVEGTLCKTAIPYKRKYLSDNHILISALVIASTVILTVLGAIIWFLYKKHSDSRFTTVFSTAPQSPYNEDCVLVVGEENEYPVQFD</variation>
    <location>
        <begin position="1608"/>
        <end position="1722"/>
    </location>
</feature>
<feature type="splice variant" id="VSP_020909" description="In isoform 2." evidence="10">
    <original>GPDYTAIAIIVATLSILVLMGGLIWFLFQRHRLHLAGFSSVRYAQGVNEDEIMLPSFHD</original>
    <variation>DCPSSTWIQFQDSCYIFLQEAIKVESIEDVRNQCTDHGADMISIHNEEENAFILDTLKKQWKGPDDILLGMFYDTDDASFKWFDNSNMTFDKWTDQDDDEDLVDTCAFLHIKTGEWKKGNCEVSSVEGTLCKTAIPYKRKYLSDNHILISALVIASTVILTVLGAIIWFLYKKHSDSRFTTVFSTAPQSPYNEDCVLVVGEENEYPVQFD</variation>
    <location>
        <begin position="1664"/>
        <end position="1722"/>
    </location>
</feature>
<feature type="sequence variant" id="VAR_056156" description="In dbSNP:rs35284483.">
    <original>W</original>
    <variation>R</variation>
    <location>
        <position position="20"/>
    </location>
</feature>
<feature type="sequence variant" id="VAR_027824" description="In dbSNP:rs2271381." evidence="9">
    <original>E</original>
    <variation>D</variation>
    <location>
        <position position="268"/>
    </location>
</feature>
<feature type="sequence variant" id="VAR_027825" description="In dbSNP:rs2729709.">
    <original>K</original>
    <variation>M</variation>
    <location>
        <position position="486"/>
    </location>
</feature>
<feature type="sequence variant" id="VAR_056157" description="In dbSNP:rs34020639.">
    <original>V</original>
    <variation>A</variation>
    <location>
        <position position="666"/>
    </location>
</feature>
<feature type="sequence variant" id="VAR_024522" description="In dbSNP:rs1397706.">
    <original>D</original>
    <variation>N</variation>
    <location>
        <position position="692"/>
    </location>
</feature>
<feature type="sequence variant" id="VAR_027826" description="In dbSNP:rs3951216." evidence="9">
    <original>D</original>
    <variation>E</variation>
    <location>
        <position position="807"/>
    </location>
</feature>
<feature type="sequence variant" id="VAR_027827" description="In dbSNP:rs3815875.">
    <original>D</original>
    <variation>A</variation>
    <location>
        <position position="884"/>
    </location>
</feature>
<feature type="sequence variant" id="VAR_027828" description="In dbSNP:rs2303549.">
    <original>T</original>
    <variation>S</variation>
    <location>
        <position position="1202"/>
    </location>
</feature>
<feature type="sequence variant" id="VAR_027829" description="In dbSNP:rs12692566." evidence="7 8">
    <original>K</original>
    <variation>N</variation>
    <location>
        <position position="1321"/>
    </location>
</feature>
<feature type="sequence variant" id="VAR_027830" description="In dbSNP:rs17827158.">
    <original>K</original>
    <variation>R</variation>
    <location>
        <position position="1347"/>
    </location>
</feature>
<feature type="sequence variant" id="VAR_027831" description="In dbSNP:rs2059696.">
    <original>Y</original>
    <variation>H</variation>
    <location>
        <position position="1391"/>
    </location>
</feature>
<feature type="sequence variant" id="VAR_056158" description="In dbSNP:rs35941588.">
    <original>T</original>
    <variation>I</variation>
    <location>
        <position position="1393"/>
    </location>
</feature>
<feature type="strand" evidence="15">
    <location>
        <begin position="36"/>
        <end position="40"/>
    </location>
</feature>
<feature type="turn" evidence="15">
    <location>
        <begin position="41"/>
        <end position="43"/>
    </location>
</feature>
<feature type="strand" evidence="15">
    <location>
        <begin position="46"/>
        <end position="50"/>
    </location>
</feature>
<feature type="strand" evidence="15">
    <location>
        <begin position="53"/>
        <end position="57"/>
    </location>
</feature>
<feature type="strand" evidence="15">
    <location>
        <begin position="61"/>
        <end position="63"/>
    </location>
</feature>
<feature type="strand" evidence="15">
    <location>
        <begin position="66"/>
        <end position="70"/>
    </location>
</feature>
<feature type="helix" evidence="15">
    <location>
        <begin position="71"/>
        <end position="73"/>
    </location>
</feature>
<feature type="strand" evidence="15">
    <location>
        <begin position="74"/>
        <end position="77"/>
    </location>
</feature>
<feature type="turn" evidence="15">
    <location>
        <begin position="78"/>
        <end position="81"/>
    </location>
</feature>
<feature type="strand" evidence="15">
    <location>
        <begin position="82"/>
        <end position="87"/>
    </location>
</feature>
<feature type="strand" evidence="15">
    <location>
        <begin position="94"/>
        <end position="98"/>
    </location>
</feature>
<feature type="strand" evidence="14">
    <location>
        <begin position="100"/>
        <end position="102"/>
    </location>
</feature>
<feature type="strand" evidence="15">
    <location>
        <begin position="103"/>
        <end position="105"/>
    </location>
</feature>
<feature type="strand" evidence="15">
    <location>
        <begin position="109"/>
        <end position="111"/>
    </location>
</feature>
<feature type="strand" evidence="15">
    <location>
        <begin position="114"/>
        <end position="116"/>
    </location>
</feature>
<feature type="helix" evidence="15">
    <location>
        <begin position="118"/>
        <end position="120"/>
    </location>
</feature>
<feature type="strand" evidence="15">
    <location>
        <begin position="122"/>
        <end position="133"/>
    </location>
</feature>
<feature type="strand" evidence="15">
    <location>
        <begin position="140"/>
        <end position="145"/>
    </location>
</feature>
<feature type="strand" evidence="15">
    <location>
        <begin position="159"/>
        <end position="161"/>
    </location>
</feature>
<feature type="turn" evidence="15">
    <location>
        <begin position="162"/>
        <end position="166"/>
    </location>
</feature>
<feature type="strand" evidence="15">
    <location>
        <begin position="171"/>
        <end position="175"/>
    </location>
</feature>
<feature type="strand" evidence="15">
    <location>
        <begin position="178"/>
        <end position="182"/>
    </location>
</feature>
<feature type="strand" evidence="15">
    <location>
        <begin position="189"/>
        <end position="191"/>
    </location>
</feature>
<feature type="strand" evidence="15">
    <location>
        <begin position="193"/>
        <end position="195"/>
    </location>
</feature>
<feature type="helix" evidence="15">
    <location>
        <begin position="200"/>
        <end position="203"/>
    </location>
</feature>
<feature type="strand" evidence="15">
    <location>
        <begin position="206"/>
        <end position="209"/>
    </location>
</feature>
<feature type="strand" evidence="14">
    <location>
        <begin position="214"/>
        <end position="217"/>
    </location>
</feature>
<feature type="strand" evidence="14">
    <location>
        <begin position="220"/>
        <end position="222"/>
    </location>
</feature>
<feature type="helix" evidence="15">
    <location>
        <begin position="224"/>
        <end position="226"/>
    </location>
</feature>
<feature type="strand" evidence="15">
    <location>
        <begin position="228"/>
        <end position="238"/>
    </location>
</feature>
<feature type="helix" evidence="15">
    <location>
        <begin position="240"/>
        <end position="249"/>
    </location>
</feature>
<feature type="helix" evidence="15">
    <location>
        <begin position="260"/>
        <end position="268"/>
    </location>
</feature>
<feature type="strand" evidence="15">
    <location>
        <begin position="270"/>
        <end position="272"/>
    </location>
</feature>
<feature type="strand" evidence="15">
    <location>
        <begin position="274"/>
        <end position="288"/>
    </location>
</feature>
<feature type="strand" evidence="14">
    <location>
        <begin position="292"/>
        <end position="294"/>
    </location>
</feature>
<feature type="strand" evidence="14">
    <location>
        <begin position="310"/>
        <end position="313"/>
    </location>
</feature>
<feature type="strand" evidence="15">
    <location>
        <begin position="317"/>
        <end position="321"/>
    </location>
</feature>
<feature type="turn" evidence="15">
    <location>
        <begin position="322"/>
        <end position="324"/>
    </location>
</feature>
<feature type="strand" evidence="15">
    <location>
        <begin position="327"/>
        <end position="330"/>
    </location>
</feature>
<feature type="strand" evidence="15">
    <location>
        <begin position="336"/>
        <end position="343"/>
    </location>
</feature>
<feature type="strand" evidence="15">
    <location>
        <begin position="365"/>
        <end position="368"/>
    </location>
</feature>
<feature type="strand" evidence="15">
    <location>
        <begin position="371"/>
        <end position="380"/>
    </location>
</feature>
<feature type="helix" evidence="15">
    <location>
        <begin position="382"/>
        <end position="390"/>
    </location>
</feature>
<feature type="turn" evidence="15">
    <location>
        <begin position="391"/>
        <end position="393"/>
    </location>
</feature>
<feature type="strand" evidence="15">
    <location>
        <begin position="394"/>
        <end position="396"/>
    </location>
</feature>
<feature type="helix" evidence="15">
    <location>
        <begin position="402"/>
        <end position="410"/>
    </location>
</feature>
<feature type="helix" evidence="14">
    <location>
        <begin position="412"/>
        <end position="416"/>
    </location>
</feature>
<feature type="strand" evidence="15">
    <location>
        <begin position="421"/>
        <end position="427"/>
    </location>
</feature>
<feature type="strand" evidence="15">
    <location>
        <begin position="429"/>
        <end position="433"/>
    </location>
</feature>
<feature type="strand" evidence="14">
    <location>
        <begin position="435"/>
        <end position="438"/>
    </location>
</feature>
<feature type="strand" evidence="15">
    <location>
        <begin position="461"/>
        <end position="466"/>
    </location>
</feature>
<feature type="turn" evidence="15">
    <location>
        <begin position="467"/>
        <end position="470"/>
    </location>
</feature>
<feature type="strand" evidence="15">
    <location>
        <begin position="471"/>
        <end position="475"/>
    </location>
</feature>
<feature type="strand" evidence="15">
    <location>
        <begin position="481"/>
        <end position="488"/>
    </location>
</feature>
<feature type="turn" evidence="15">
    <location>
        <begin position="503"/>
        <end position="506"/>
    </location>
</feature>
<feature type="strand" evidence="15">
    <location>
        <begin position="507"/>
        <end position="510"/>
    </location>
</feature>
<feature type="strand" evidence="15">
    <location>
        <begin position="513"/>
        <end position="522"/>
    </location>
</feature>
<feature type="helix" evidence="15">
    <location>
        <begin position="535"/>
        <end position="548"/>
    </location>
</feature>
<feature type="strand" evidence="14">
    <location>
        <begin position="550"/>
        <end position="553"/>
    </location>
</feature>
<feature type="strand" evidence="15">
    <location>
        <begin position="555"/>
        <end position="561"/>
    </location>
</feature>
<feature type="strand" evidence="15">
    <location>
        <begin position="563"/>
        <end position="567"/>
    </location>
</feature>
<feature type="strand" evidence="14">
    <location>
        <begin position="574"/>
        <end position="576"/>
    </location>
</feature>
<feature type="strand" evidence="15">
    <location>
        <begin position="593"/>
        <end position="595"/>
    </location>
</feature>
<feature type="strand" evidence="15">
    <location>
        <begin position="597"/>
        <end position="603"/>
    </location>
</feature>
<feature type="turn" evidence="15">
    <location>
        <begin position="604"/>
        <end position="607"/>
    </location>
</feature>
<feature type="strand" evidence="15">
    <location>
        <begin position="609"/>
        <end position="612"/>
    </location>
</feature>
<feature type="turn" evidence="15">
    <location>
        <begin position="614"/>
        <end position="616"/>
    </location>
</feature>
<feature type="strand" evidence="15">
    <location>
        <begin position="619"/>
        <end position="625"/>
    </location>
</feature>
<feature type="strand" evidence="14">
    <location>
        <begin position="629"/>
        <end position="632"/>
    </location>
</feature>
<feature type="strand" evidence="14">
    <location>
        <begin position="644"/>
        <end position="646"/>
    </location>
</feature>
<feature type="strand" evidence="14">
    <location>
        <begin position="653"/>
        <end position="660"/>
    </location>
</feature>
<feature type="turn" evidence="14">
    <location>
        <begin position="662"/>
        <end position="664"/>
    </location>
</feature>
<feature type="helix" evidence="14">
    <location>
        <begin position="671"/>
        <end position="680"/>
    </location>
</feature>
<feature type="helix" evidence="14">
    <location>
        <begin position="691"/>
        <end position="701"/>
    </location>
</feature>
<feature type="strand" evidence="14">
    <location>
        <begin position="711"/>
        <end position="716"/>
    </location>
</feature>
<feature type="helix" evidence="14">
    <location>
        <begin position="720"/>
        <end position="722"/>
    </location>
</feature>
<feature type="turn" evidence="14">
    <location>
        <begin position="745"/>
        <end position="749"/>
    </location>
</feature>
<feature type="strand" evidence="14">
    <location>
        <begin position="752"/>
        <end position="755"/>
    </location>
</feature>
<feature type="strand" evidence="14">
    <location>
        <begin position="769"/>
        <end position="772"/>
    </location>
</feature>
<feature type="strand" evidence="14">
    <location>
        <begin position="780"/>
        <end position="788"/>
    </location>
</feature>
<feature type="strand" evidence="14">
    <location>
        <begin position="793"/>
        <end position="796"/>
    </location>
</feature>
<feature type="helix" evidence="14">
    <location>
        <begin position="797"/>
        <end position="799"/>
    </location>
</feature>
<feature type="turn" evidence="14">
    <location>
        <begin position="800"/>
        <end position="804"/>
    </location>
</feature>
<feature type="helix" evidence="14">
    <location>
        <begin position="805"/>
        <end position="812"/>
    </location>
</feature>
<feature type="strand" evidence="14">
    <location>
        <begin position="823"/>
        <end position="831"/>
    </location>
</feature>
<feature type="helix" evidence="14">
    <location>
        <begin position="833"/>
        <end position="840"/>
    </location>
</feature>
<feature type="strand" evidence="14">
    <location>
        <begin position="842"/>
        <end position="847"/>
    </location>
</feature>
<feature type="helix" evidence="14">
    <location>
        <begin position="853"/>
        <end position="866"/>
    </location>
</feature>
<feature type="strand" evidence="14">
    <location>
        <begin position="872"/>
        <end position="874"/>
    </location>
</feature>
<feature type="strand" evidence="14">
    <location>
        <begin position="907"/>
        <end position="911"/>
    </location>
</feature>
<feature type="turn" evidence="14">
    <location>
        <begin position="912"/>
        <end position="916"/>
    </location>
</feature>
<feature type="strand" evidence="14">
    <location>
        <begin position="926"/>
        <end position="932"/>
    </location>
</feature>
<feature type="strand" evidence="14">
    <location>
        <begin position="945"/>
        <end position="948"/>
    </location>
</feature>
<feature type="strand" evidence="14">
    <location>
        <begin position="956"/>
        <end position="958"/>
    </location>
</feature>
<feature type="strand" evidence="14">
    <location>
        <begin position="961"/>
        <end position="964"/>
    </location>
</feature>
<feature type="strand" evidence="14">
    <location>
        <begin position="970"/>
        <end position="972"/>
    </location>
</feature>
<feature type="helix" evidence="14">
    <location>
        <begin position="973"/>
        <end position="982"/>
    </location>
</feature>
<feature type="strand" evidence="14">
    <location>
        <begin position="983"/>
        <end position="987"/>
    </location>
</feature>
<feature type="helix" evidence="14">
    <location>
        <begin position="993"/>
        <end position="1002"/>
    </location>
</feature>
<feature type="helix" evidence="14">
    <location>
        <begin position="1003"/>
        <end position="1005"/>
    </location>
</feature>
<feature type="strand" evidence="14">
    <location>
        <begin position="1008"/>
        <end position="1010"/>
    </location>
</feature>
<feature type="strand" evidence="14">
    <location>
        <begin position="1015"/>
        <end position="1020"/>
    </location>
</feature>
<feature type="turn" evidence="14">
    <location>
        <begin position="1025"/>
        <end position="1027"/>
    </location>
</feature>
<feature type="turn" evidence="14">
    <location>
        <begin position="1038"/>
        <end position="1040"/>
    </location>
</feature>
<feature type="strand" evidence="14">
    <location>
        <begin position="1058"/>
        <end position="1064"/>
    </location>
</feature>
<feature type="turn" evidence="14">
    <location>
        <begin position="1070"/>
        <end position="1073"/>
    </location>
</feature>
<feature type="strand" evidence="14">
    <location>
        <begin position="1075"/>
        <end position="1078"/>
    </location>
</feature>
<feature type="strand" evidence="14">
    <location>
        <begin position="1082"/>
        <end position="1085"/>
    </location>
</feature>
<feature type="strand" evidence="14">
    <location>
        <begin position="1089"/>
        <end position="1091"/>
    </location>
</feature>
<feature type="strand" evidence="14">
    <location>
        <begin position="1108"/>
        <end position="1110"/>
    </location>
</feature>
<feature type="strand" evidence="14">
    <location>
        <begin position="1113"/>
        <end position="1118"/>
    </location>
</feature>
<feature type="helix" evidence="14">
    <location>
        <begin position="1124"/>
        <end position="1133"/>
    </location>
</feature>
<feature type="helix" evidence="14">
    <location>
        <begin position="1144"/>
        <end position="1157"/>
    </location>
</feature>
<feature type="strand" evidence="14">
    <location>
        <begin position="1164"/>
        <end position="1167"/>
    </location>
</feature>
<feature type="strand" evidence="14">
    <location>
        <begin position="1169"/>
        <end position="1172"/>
    </location>
</feature>
<feature type="strand" evidence="14">
    <location>
        <begin position="1174"/>
        <end position="1176"/>
    </location>
</feature>
<feature type="strand" evidence="14">
    <location>
        <begin position="1187"/>
        <end position="1189"/>
    </location>
</feature>
<feature type="strand" evidence="14">
    <location>
        <begin position="1195"/>
        <end position="1200"/>
    </location>
</feature>
<feature type="strand" evidence="14">
    <location>
        <begin position="1206"/>
        <end position="1209"/>
    </location>
</feature>
<feature type="strand" evidence="14">
    <location>
        <begin position="1211"/>
        <end position="1213"/>
    </location>
</feature>
<feature type="strand" evidence="14">
    <location>
        <begin position="1218"/>
        <end position="1222"/>
    </location>
</feature>
<feature type="helix" evidence="14">
    <location>
        <begin position="1269"/>
        <end position="1280"/>
    </location>
</feature>
<feature type="strand" evidence="14">
    <location>
        <begin position="1281"/>
        <end position="1283"/>
    </location>
</feature>
<feature type="helix" evidence="14">
    <location>
        <begin position="1293"/>
        <end position="1303"/>
    </location>
</feature>
<feature type="turn" evidence="14">
    <location>
        <begin position="1304"/>
        <end position="1308"/>
    </location>
</feature>
<feature type="strand" evidence="14">
    <location>
        <begin position="1310"/>
        <end position="1313"/>
    </location>
</feature>
<feature type="helix" evidence="14">
    <location>
        <begin position="1319"/>
        <end position="1321"/>
    </location>
</feature>
<feature type="strand" evidence="14">
    <location>
        <begin position="1324"/>
        <end position="1328"/>
    </location>
</feature>
<feature type="strand" evidence="14">
    <location>
        <begin position="1336"/>
        <end position="1339"/>
    </location>
</feature>
<feature type="strand" evidence="14">
    <location>
        <begin position="1348"/>
        <end position="1352"/>
    </location>
</feature>
<feature type="strand" evidence="14">
    <location>
        <begin position="1358"/>
        <end position="1362"/>
    </location>
</feature>
<feature type="helix" evidence="14">
    <location>
        <begin position="1366"/>
        <end position="1368"/>
    </location>
</feature>
<feature type="helix" evidence="14">
    <location>
        <begin position="1370"/>
        <end position="1374"/>
    </location>
</feature>
<feature type="strand" evidence="14">
    <location>
        <begin position="1376"/>
        <end position="1379"/>
    </location>
</feature>
<name>LY75_HUMAN</name>
<sequence length="1722" mass="198311">MRTGWATPRRPAGLLMLLFWFFDLAEPSGRAANDPFTIVHGNTGKCIKPVYGWIVADDCDETEDKLWKWVSQHRLFHLHSQKCLGLDITKSVNELRMFSCDSSAMLWWKCEHHSLYGAARYRLALKDGHGTAISNASDVWKKGGSEESLCDQPYHEIYTRDGNSYGRPCEFPFLIDGTWHHDCILDEDHSGPWCATTLNYEYDRKWGICLKPENGCEDNWEKNEQFGSCYQFNTQTALSWKEAYVSCQNQGADLLSINSAAELTYLKEKEGIAKIFWIGLNQLYSARGWEWSDHKPLNFLNWDPDRPSAPTIGGSSCARMDAESGLWQSFSCEAQLPYVCRKPLNNTVELTDVWTYSDTRCDAGWLPNNGFCYLLVNESNSWDKAHAKCKAFSSDLISIHSLADVEVVVTKLHNEDIKEEVWIGLKNINIPTLFQWSDGTEVTLTYWDENEPNVPYNKTPNCVSYLGELGQWKVQSCEEKLKYVCKRKGEKLNDASSDKMCPPDEGWKRHGETCYKIYEDEVPFGTNCNLTITSRFEQEYLNDLMKKYDKSLRKYFWTGLRDVDSCGEYNWATVGGRRRAVTFSNWNFLEPASPGGCVAMSTGKSVGKWEVKDCRSFKALSICKKMSGPLGPEEASPKPDDPCPEGWQSFPASLSCYKVFHAERIVRKRNWEEAERFCQALGAHLSSFSHVDEIKEFLHFLTDQFSGQHWLWIGLNKRSPDLQGSWQWSDRTPVSTIIMPNEFQQDYDIRDCAAVKVFHRPWRRGWHFYDDREFIYLRPFACDTKLEWVCQIPKGRTPKTPDWYNPDRAGIHGPPLIIEGSEYWFVADLHLNYEEAVLYCASNHSFLATITSFVGLKAIKNKIANISGDGQKWWIRISEWPIDDHFTYSRYPWHRFPVTFGEECLYMSAKTWLIDLGKPTDCSTKLPFICEKYNVSSLEKYSPDSAAKVQCSEQWIPFQNKCFLKIKPVSLTFSQASDTCHSYGGTLPSVLSQIEQDFITSLLPDMEATLWIGLRWTAYEKINKWTDNRELTYSNFHPLLVSGRLRIPENFFEEESRYHCALILNLQKSPFTGTWNFTSCSERHFVSLCQKYSEVKSRQTLQNASETVKYLNNLYKIIPKTLTWHSAKRECLKSNMQLVSITDPYQQAFLSVQALLHNSSLWIGLFSQDDELNFGWSDGKRLHFSRWAETNGQLEDCVVLDTDGFWKTVDCNDNQPGAICYYSGNETEKEVKPVDSVKCPSPVLNTPWIPFQNCCYNFIITKNRHMATTQDEVHTKCQKLNPKSHILSIRDEKENNFVLEQLLYFNYMASWVMLGITYRNKSLMWFDKTPLSYTHWRAGRPTIKNEKFLAGLSTDGFWDIQTFKVIEEAVYFHQHSILACKIEMVDYKEEYNTTLPQFMPYEDGIYSVIQKKVTWYEALNMCSQSGGHLASVHNQNGQLFLEDIVKRDGFPLWVGLSSHDGSESSFEWSDGSTFDYIPWKGQTSPGNCVLLDPKGTWKHEKCNSVKDGAICYKPTKSKKLSRLTYSSRCPAAKENGSRWIQYKGHCYKSDQALHSFSEAKKLCSKHDHSATIVSIKDEDENKFVSRLMRENNNITMRVWLGLSQHSVDQSWSWLDGSEVTFVKWENKSKSGVGRCSMLIASNETWKKVECEHGFGRVVCKVPLGPDYTAIAIIVATLSILVLMGGLIWFLFQRHRLHLAGFSSVRYAQGVNEDEIMLPSFHD</sequence>